<reference key="1">
    <citation type="journal article" date="1998" name="Pharmacogenetics">
        <title>Deficiency of cytosolic arylamine N-acetylation in the domestic cat and wild felids caused by the presence of a single NAT1-like gene.</title>
        <authorList>
            <person name="Trepanier L.A."/>
            <person name="Cribb A.E."/>
            <person name="Spielberg S.P."/>
            <person name="Ray K."/>
        </authorList>
    </citation>
    <scope>NUCLEOTIDE SEQUENCE [GENOMIC DNA]</scope>
</reference>
<evidence type="ECO:0000250" key="1"/>
<evidence type="ECO:0000305" key="2"/>
<sequence length="258" mass="30138">IGYKNARNKLDLETLTDILQHQIRAIPFENLNIHCGETMELGLKAIFEQVVWRNRGGWCLQVNHLLYWVLTTIGYETTMLGGYVYSTAANKYSNAMIHLLLKVTTEGKNYIVDAGFGRSYQMWQPLELISGKDQLQVPCIFRLTEERGIWYLDQIRRQQYIANEEFLNSDLLEKNKYRKIYSFTLEPRTIEDFESVNTYLQTSPTSVFTSKSFCSLQTSEGVHCLVGCTLTYRKFNYKDNMDLVEFKVLNEEEVEQKL</sequence>
<organism>
    <name type="scientific">Felis catus</name>
    <name type="common">Cat</name>
    <name type="synonym">Felis silvestris catus</name>
    <dbReference type="NCBI Taxonomy" id="9685"/>
    <lineage>
        <taxon>Eukaryota</taxon>
        <taxon>Metazoa</taxon>
        <taxon>Chordata</taxon>
        <taxon>Craniata</taxon>
        <taxon>Vertebrata</taxon>
        <taxon>Euteleostomi</taxon>
        <taxon>Mammalia</taxon>
        <taxon>Eutheria</taxon>
        <taxon>Laurasiatheria</taxon>
        <taxon>Carnivora</taxon>
        <taxon>Feliformia</taxon>
        <taxon>Felidae</taxon>
        <taxon>Felinae</taxon>
        <taxon>Felis</taxon>
    </lineage>
</organism>
<name>ARY1_FELCA</name>
<keyword id="KW-0012">Acyltransferase</keyword>
<keyword id="KW-0963">Cytoplasm</keyword>
<keyword id="KW-1185">Reference proteome</keyword>
<keyword id="KW-0808">Transferase</keyword>
<protein>
    <recommendedName>
        <fullName>Arylamine N-acetyltransferase 1</fullName>
        <ecNumber>2.3.1.5</ecNumber>
    </recommendedName>
    <alternativeName>
        <fullName>Arylamide acetylase 1</fullName>
    </alternativeName>
    <alternativeName>
        <fullName>N-acetyltransferase type 1</fullName>
        <shortName>NAT-1</shortName>
    </alternativeName>
</protein>
<proteinExistence type="inferred from homology"/>
<gene>
    <name type="primary">NAT1</name>
    <name type="synonym">NAT</name>
</gene>
<feature type="chain" id="PRO_0000107903" description="Arylamine N-acetyltransferase 1">
    <location>
        <begin position="1" status="less than"/>
        <end position="258" status="greater than"/>
    </location>
</feature>
<feature type="active site" description="Acyl-thioester intermediate" evidence="1">
    <location>
        <position position="59"/>
    </location>
</feature>
<feature type="active site" evidence="1">
    <location>
        <position position="98"/>
    </location>
</feature>
<feature type="active site" evidence="1">
    <location>
        <position position="113"/>
    </location>
</feature>
<feature type="binding site" evidence="1">
    <location>
        <begin position="97"/>
        <end position="98"/>
    </location>
    <ligand>
        <name>substrate</name>
    </ligand>
</feature>
<feature type="binding site" evidence="1">
    <location>
        <position position="199"/>
    </location>
    <ligand>
        <name>CoA</name>
        <dbReference type="ChEBI" id="CHEBI:57287"/>
    </ligand>
</feature>
<feature type="binding site" evidence="1">
    <location>
        <position position="205"/>
    </location>
    <ligand>
        <name>CoA</name>
        <dbReference type="ChEBI" id="CHEBI:57287"/>
    </ligand>
</feature>
<feature type="non-terminal residue">
    <location>
        <position position="1"/>
    </location>
</feature>
<feature type="non-terminal residue">
    <location>
        <position position="258"/>
    </location>
</feature>
<comment type="function">
    <text>Participates in the detoxification of a plethora of hydrazine and arylamine drugs.</text>
</comment>
<comment type="catalytic activity">
    <reaction>
        <text>an arylamine + acetyl-CoA = an N-acetylarylamine + CoA</text>
        <dbReference type="Rhea" id="RHEA:16613"/>
        <dbReference type="ChEBI" id="CHEBI:13790"/>
        <dbReference type="ChEBI" id="CHEBI:50471"/>
        <dbReference type="ChEBI" id="CHEBI:57287"/>
        <dbReference type="ChEBI" id="CHEBI:57288"/>
        <dbReference type="EC" id="2.3.1.5"/>
    </reaction>
</comment>
<comment type="subcellular location">
    <subcellularLocation>
        <location>Cytoplasm</location>
    </subcellularLocation>
</comment>
<comment type="similarity">
    <text evidence="2">Belongs to the arylamine N-acetyltransferase family.</text>
</comment>
<dbReference type="EC" id="2.3.1.5"/>
<dbReference type="EMBL" id="AF030398">
    <property type="protein sequence ID" value="AAC18940.1"/>
    <property type="molecule type" value="Genomic_DNA"/>
</dbReference>
<dbReference type="SMR" id="O62696"/>
<dbReference type="STRING" id="9685.ENSFCAP00000038159"/>
<dbReference type="InParanoid" id="O62696"/>
<dbReference type="Proteomes" id="UP000011712">
    <property type="component" value="Unplaced"/>
</dbReference>
<dbReference type="GO" id="GO:0005737">
    <property type="term" value="C:cytoplasm"/>
    <property type="evidence" value="ECO:0007669"/>
    <property type="project" value="UniProtKB-SubCell"/>
</dbReference>
<dbReference type="GO" id="GO:0004060">
    <property type="term" value="F:arylamine N-acetyltransferase activity"/>
    <property type="evidence" value="ECO:0000318"/>
    <property type="project" value="GO_Central"/>
</dbReference>
<dbReference type="FunFam" id="3.30.2140.20:FF:000001">
    <property type="entry name" value="Arylamine N-acetyltransferase 1"/>
    <property type="match status" value="1"/>
</dbReference>
<dbReference type="Gene3D" id="3.30.2140.20">
    <property type="match status" value="1"/>
</dbReference>
<dbReference type="InterPro" id="IPR001447">
    <property type="entry name" value="Arylamine_N-AcTrfase"/>
</dbReference>
<dbReference type="InterPro" id="IPR053710">
    <property type="entry name" value="Arylamine_NAT_domain_sf"/>
</dbReference>
<dbReference type="InterPro" id="IPR038765">
    <property type="entry name" value="Papain-like_cys_pep_sf"/>
</dbReference>
<dbReference type="PANTHER" id="PTHR11786:SF8">
    <property type="entry name" value="ARYLAMINE N-ACETYLTRANSFERASE 1"/>
    <property type="match status" value="1"/>
</dbReference>
<dbReference type="PANTHER" id="PTHR11786">
    <property type="entry name" value="N-HYDROXYARYLAMINE O-ACETYLTRANSFERASE"/>
    <property type="match status" value="1"/>
</dbReference>
<dbReference type="Pfam" id="PF00797">
    <property type="entry name" value="Acetyltransf_2"/>
    <property type="match status" value="1"/>
</dbReference>
<dbReference type="PRINTS" id="PR01543">
    <property type="entry name" value="ANATRNSFRASE"/>
</dbReference>
<dbReference type="SUPFAM" id="SSF54001">
    <property type="entry name" value="Cysteine proteinases"/>
    <property type="match status" value="1"/>
</dbReference>
<accession>O62696</accession>